<accession>A4WMH5</accession>
<gene>
    <name evidence="1" type="primary">rpl3</name>
    <name type="ordered locus">Pars_2046</name>
</gene>
<proteinExistence type="inferred from homology"/>
<feature type="chain" id="PRO_0000353624" description="Large ribosomal subunit protein uL3">
    <location>
        <begin position="1"/>
        <end position="338"/>
    </location>
</feature>
<feature type="region of interest" description="Disordered" evidence="2">
    <location>
        <begin position="230"/>
        <end position="256"/>
    </location>
</feature>
<feature type="region of interest" description="Disordered" evidence="2">
    <location>
        <begin position="315"/>
        <end position="338"/>
    </location>
</feature>
<keyword id="KW-0687">Ribonucleoprotein</keyword>
<keyword id="KW-0689">Ribosomal protein</keyword>
<keyword id="KW-0694">RNA-binding</keyword>
<keyword id="KW-0699">rRNA-binding</keyword>
<sequence length="338" mass="37468">MGLKINRPRRGSMGVYPRKRAADIVPRVRTWPDVNLGKPALLGFAAYKAGMLHAVVVDDRPTSPLYGKEVVKAVTVLDAPPLFVWGFRLYTLDPTNGYLRSAAEVWAGELPKHLSRVLTLPEKVDVDKQMKQVEEYRDVAVEVRALVATQPHLSGIGKKTPELLEIPIGGVPNIDERIKFAISLLGKTVSPKDVFSPGQLVDVIAVTKGKGWQGVVKRFGVTILPRWHKHRKGHRRTGTIGPQAPALMFTQPRPGQMGFHQRTEYNKRLLKIGENGAEITPKSGFPHYGVIKGPYILIQGSLPGARKRLVVLRHPARPPRRAPPTTEPQVVWVSSQQP</sequence>
<comment type="function">
    <text evidence="1">One of the primary rRNA binding proteins, it binds directly near the 3'-end of the 23S rRNA, where it nucleates assembly of the 50S subunit.</text>
</comment>
<comment type="subunit">
    <text evidence="1">Part of the 50S ribosomal subunit. Forms a cluster with proteins L14 and L24e.</text>
</comment>
<comment type="similarity">
    <text evidence="1">Belongs to the universal ribosomal protein uL3 family.</text>
</comment>
<reference key="1">
    <citation type="submission" date="2007-04" db="EMBL/GenBank/DDBJ databases">
        <title>Complete sequence of Pyrobaculum arsenaticum DSM 13514.</title>
        <authorList>
            <consortium name="US DOE Joint Genome Institute"/>
            <person name="Copeland A."/>
            <person name="Lucas S."/>
            <person name="Lapidus A."/>
            <person name="Barry K."/>
            <person name="Glavina del Rio T."/>
            <person name="Dalin E."/>
            <person name="Tice H."/>
            <person name="Pitluck S."/>
            <person name="Chain P."/>
            <person name="Malfatti S."/>
            <person name="Shin M."/>
            <person name="Vergez L."/>
            <person name="Schmutz J."/>
            <person name="Larimer F."/>
            <person name="Land M."/>
            <person name="Hauser L."/>
            <person name="Kyrpides N."/>
            <person name="Mikhailova N."/>
            <person name="Cozen A.E."/>
            <person name="Fitz-Gibbon S.T."/>
            <person name="House C.H."/>
            <person name="Saltikov C."/>
            <person name="Lowe T.M."/>
            <person name="Richardson P."/>
        </authorList>
    </citation>
    <scope>NUCLEOTIDE SEQUENCE [LARGE SCALE GENOMIC DNA]</scope>
    <source>
        <strain>ATCC 700994 / DSM 13514 / JCM 11321 / PZ6</strain>
    </source>
</reference>
<evidence type="ECO:0000255" key="1">
    <source>
        <dbReference type="HAMAP-Rule" id="MF_01325"/>
    </source>
</evidence>
<evidence type="ECO:0000256" key="2">
    <source>
        <dbReference type="SAM" id="MobiDB-lite"/>
    </source>
</evidence>
<evidence type="ECO:0000305" key="3"/>
<name>RL3_PYRAR</name>
<dbReference type="EMBL" id="CP000660">
    <property type="protein sequence ID" value="ABP51592.1"/>
    <property type="molecule type" value="Genomic_DNA"/>
</dbReference>
<dbReference type="RefSeq" id="WP_011901495.1">
    <property type="nucleotide sequence ID" value="NC_009376.1"/>
</dbReference>
<dbReference type="SMR" id="A4WMH5"/>
<dbReference type="STRING" id="340102.Pars_2046"/>
<dbReference type="GeneID" id="5055086"/>
<dbReference type="KEGG" id="pas:Pars_2046"/>
<dbReference type="HOGENOM" id="CLU_033361_2_0_2"/>
<dbReference type="OrthoDB" id="6121at2157"/>
<dbReference type="PhylomeDB" id="A4WMH5"/>
<dbReference type="Proteomes" id="UP000001567">
    <property type="component" value="Chromosome"/>
</dbReference>
<dbReference type="GO" id="GO:0022625">
    <property type="term" value="C:cytosolic large ribosomal subunit"/>
    <property type="evidence" value="ECO:0007669"/>
    <property type="project" value="TreeGrafter"/>
</dbReference>
<dbReference type="GO" id="GO:0019843">
    <property type="term" value="F:rRNA binding"/>
    <property type="evidence" value="ECO:0007669"/>
    <property type="project" value="UniProtKB-UniRule"/>
</dbReference>
<dbReference type="GO" id="GO:0003735">
    <property type="term" value="F:structural constituent of ribosome"/>
    <property type="evidence" value="ECO:0007669"/>
    <property type="project" value="InterPro"/>
</dbReference>
<dbReference type="GO" id="GO:0006412">
    <property type="term" value="P:translation"/>
    <property type="evidence" value="ECO:0007669"/>
    <property type="project" value="UniProtKB-UniRule"/>
</dbReference>
<dbReference type="Gene3D" id="3.30.1430.10">
    <property type="match status" value="1"/>
</dbReference>
<dbReference type="Gene3D" id="4.10.960.10">
    <property type="entry name" value="Ribosomal protein L3, domain 3"/>
    <property type="match status" value="1"/>
</dbReference>
<dbReference type="Gene3D" id="2.40.30.10">
    <property type="entry name" value="Translation factors"/>
    <property type="match status" value="1"/>
</dbReference>
<dbReference type="HAMAP" id="MF_01325_A">
    <property type="entry name" value="Ribosomal_uL3_A"/>
    <property type="match status" value="1"/>
</dbReference>
<dbReference type="InterPro" id="IPR045077">
    <property type="entry name" value="L3_arc_euk"/>
</dbReference>
<dbReference type="InterPro" id="IPR044892">
    <property type="entry name" value="Ribosomal_L3_dom_3_arc_sf"/>
</dbReference>
<dbReference type="InterPro" id="IPR000597">
    <property type="entry name" value="Ribosomal_uL3"/>
</dbReference>
<dbReference type="InterPro" id="IPR019928">
    <property type="entry name" value="Ribosomal_uL3_arc"/>
</dbReference>
<dbReference type="InterPro" id="IPR019926">
    <property type="entry name" value="Ribosomal_uL3_CS"/>
</dbReference>
<dbReference type="InterPro" id="IPR009000">
    <property type="entry name" value="Transl_B-barrel_sf"/>
</dbReference>
<dbReference type="NCBIfam" id="TIGR03626">
    <property type="entry name" value="L3_arch"/>
    <property type="match status" value="1"/>
</dbReference>
<dbReference type="NCBIfam" id="NF003261">
    <property type="entry name" value="PRK04231.1"/>
    <property type="match status" value="1"/>
</dbReference>
<dbReference type="PANTHER" id="PTHR11363">
    <property type="entry name" value="60S RIBOSOMAL PROTEIN L3-RELATED"/>
    <property type="match status" value="1"/>
</dbReference>
<dbReference type="PANTHER" id="PTHR11363:SF5">
    <property type="entry name" value="LARGE RIBOSOMAL SUBUNIT PROTEIN UL3"/>
    <property type="match status" value="1"/>
</dbReference>
<dbReference type="Pfam" id="PF00297">
    <property type="entry name" value="Ribosomal_L3"/>
    <property type="match status" value="1"/>
</dbReference>
<dbReference type="SUPFAM" id="SSF50447">
    <property type="entry name" value="Translation proteins"/>
    <property type="match status" value="1"/>
</dbReference>
<dbReference type="PROSITE" id="PS00474">
    <property type="entry name" value="RIBOSOMAL_L3"/>
    <property type="match status" value="1"/>
</dbReference>
<protein>
    <recommendedName>
        <fullName evidence="1">Large ribosomal subunit protein uL3</fullName>
    </recommendedName>
    <alternativeName>
        <fullName evidence="3">50S ribosomal protein L3</fullName>
    </alternativeName>
</protein>
<organism>
    <name type="scientific">Pyrobaculum arsenaticum (strain DSM 13514 / JCM 11321 / PZ6)</name>
    <dbReference type="NCBI Taxonomy" id="340102"/>
    <lineage>
        <taxon>Archaea</taxon>
        <taxon>Thermoproteota</taxon>
        <taxon>Thermoprotei</taxon>
        <taxon>Thermoproteales</taxon>
        <taxon>Thermoproteaceae</taxon>
        <taxon>Pyrobaculum</taxon>
    </lineage>
</organism>